<reference key="1">
    <citation type="submission" date="2008-02" db="EMBL/GenBank/DDBJ databases">
        <title>Genome sequence of Ureaplasma parvum serovar 3.</title>
        <authorList>
            <person name="Methe B.A."/>
            <person name="Glass J."/>
            <person name="Waites K."/>
            <person name="Shrivastava S."/>
        </authorList>
    </citation>
    <scope>NUCLEOTIDE SEQUENCE [LARGE SCALE GENOMIC DNA]</scope>
    <source>
        <strain>ATCC 27815 / 27 / NCTC 11736</strain>
    </source>
</reference>
<proteinExistence type="inferred from homology"/>
<comment type="function">
    <text evidence="1">Binds 16S rRNA, required for the assembly of 30S particles and may also be responsible for determining the conformation of the 16S rRNA at the A site.</text>
</comment>
<comment type="cofactor">
    <cofactor evidence="1">
        <name>Zn(2+)</name>
        <dbReference type="ChEBI" id="CHEBI:29105"/>
    </cofactor>
    <text evidence="1">Binds 1 zinc ion per subunit.</text>
</comment>
<comment type="subunit">
    <text evidence="1">Part of the 30S ribosomal subunit. Contacts proteins S3 and S10.</text>
</comment>
<comment type="similarity">
    <text evidence="1">Belongs to the universal ribosomal protein uS14 family. Zinc-binding uS14 subfamily.</text>
</comment>
<gene>
    <name evidence="1" type="primary">rpsZ</name>
    <name evidence="1" type="synonym">rpsN</name>
    <name type="ordered locus">UPA3_0252</name>
</gene>
<feature type="chain" id="PRO_1000087026" description="Small ribosomal subunit protein uS14">
    <location>
        <begin position="1"/>
        <end position="61"/>
    </location>
</feature>
<feature type="binding site" evidence="1">
    <location>
        <position position="24"/>
    </location>
    <ligand>
        <name>Zn(2+)</name>
        <dbReference type="ChEBI" id="CHEBI:29105"/>
    </ligand>
</feature>
<feature type="binding site" evidence="1">
    <location>
        <position position="27"/>
    </location>
    <ligand>
        <name>Zn(2+)</name>
        <dbReference type="ChEBI" id="CHEBI:29105"/>
    </ligand>
</feature>
<feature type="binding site" evidence="1">
    <location>
        <position position="40"/>
    </location>
    <ligand>
        <name>Zn(2+)</name>
        <dbReference type="ChEBI" id="CHEBI:29105"/>
    </ligand>
</feature>
<feature type="binding site" evidence="1">
    <location>
        <position position="43"/>
    </location>
    <ligand>
        <name>Zn(2+)</name>
        <dbReference type="ChEBI" id="CHEBI:29105"/>
    </ligand>
</feature>
<keyword id="KW-0479">Metal-binding</keyword>
<keyword id="KW-0687">Ribonucleoprotein</keyword>
<keyword id="KW-0689">Ribosomal protein</keyword>
<keyword id="KW-0694">RNA-binding</keyword>
<keyword id="KW-0699">rRNA-binding</keyword>
<keyword id="KW-0862">Zinc</keyword>
<sequence length="61" mass="6993">MAKKSLIAKQKKHQKFAVREYTRCVRCGRPHAVNRKFGVCRLCFRDLAYAGAIPGIKKASW</sequence>
<name>RS14Z_UREP2</name>
<protein>
    <recommendedName>
        <fullName evidence="1">Small ribosomal subunit protein uS14</fullName>
    </recommendedName>
    <alternativeName>
        <fullName evidence="2">30S ribosomal protein S14 type Z</fullName>
    </alternativeName>
</protein>
<evidence type="ECO:0000255" key="1">
    <source>
        <dbReference type="HAMAP-Rule" id="MF_01364"/>
    </source>
</evidence>
<evidence type="ECO:0000305" key="2"/>
<dbReference type="EMBL" id="CP000942">
    <property type="protein sequence ID" value="ACA32863.1"/>
    <property type="molecule type" value="Genomic_DNA"/>
</dbReference>
<dbReference type="RefSeq" id="WP_004026507.1">
    <property type="nucleotide sequence ID" value="NC_010503.1"/>
</dbReference>
<dbReference type="SMR" id="B1AIN3"/>
<dbReference type="GeneID" id="29672594"/>
<dbReference type="KEGG" id="upa:UPA3_0252"/>
<dbReference type="HOGENOM" id="CLU_139869_3_0_14"/>
<dbReference type="Proteomes" id="UP000002162">
    <property type="component" value="Chromosome"/>
</dbReference>
<dbReference type="GO" id="GO:0005737">
    <property type="term" value="C:cytoplasm"/>
    <property type="evidence" value="ECO:0007669"/>
    <property type="project" value="UniProtKB-ARBA"/>
</dbReference>
<dbReference type="GO" id="GO:0015935">
    <property type="term" value="C:small ribosomal subunit"/>
    <property type="evidence" value="ECO:0007669"/>
    <property type="project" value="TreeGrafter"/>
</dbReference>
<dbReference type="GO" id="GO:0019843">
    <property type="term" value="F:rRNA binding"/>
    <property type="evidence" value="ECO:0007669"/>
    <property type="project" value="UniProtKB-UniRule"/>
</dbReference>
<dbReference type="GO" id="GO:0003735">
    <property type="term" value="F:structural constituent of ribosome"/>
    <property type="evidence" value="ECO:0007669"/>
    <property type="project" value="InterPro"/>
</dbReference>
<dbReference type="GO" id="GO:0008270">
    <property type="term" value="F:zinc ion binding"/>
    <property type="evidence" value="ECO:0007669"/>
    <property type="project" value="UniProtKB-UniRule"/>
</dbReference>
<dbReference type="GO" id="GO:0006412">
    <property type="term" value="P:translation"/>
    <property type="evidence" value="ECO:0007669"/>
    <property type="project" value="UniProtKB-UniRule"/>
</dbReference>
<dbReference type="FunFam" id="4.10.830.10:FF:000001">
    <property type="entry name" value="30S ribosomal protein S14 type Z"/>
    <property type="match status" value="1"/>
</dbReference>
<dbReference type="Gene3D" id="4.10.830.10">
    <property type="entry name" value="30s Ribosomal Protein S14, Chain N"/>
    <property type="match status" value="1"/>
</dbReference>
<dbReference type="HAMAP" id="MF_01364_B">
    <property type="entry name" value="Ribosomal_uS14_2_B"/>
    <property type="match status" value="1"/>
</dbReference>
<dbReference type="InterPro" id="IPR001209">
    <property type="entry name" value="Ribosomal_uS14"/>
</dbReference>
<dbReference type="InterPro" id="IPR023053">
    <property type="entry name" value="Ribosomal_uS14_bact"/>
</dbReference>
<dbReference type="InterPro" id="IPR018271">
    <property type="entry name" value="Ribosomal_uS14_CS"/>
</dbReference>
<dbReference type="InterPro" id="IPR043140">
    <property type="entry name" value="Ribosomal_uS14_sf"/>
</dbReference>
<dbReference type="NCBIfam" id="NF005974">
    <property type="entry name" value="PRK08061.1"/>
    <property type="match status" value="1"/>
</dbReference>
<dbReference type="PANTHER" id="PTHR19836">
    <property type="entry name" value="30S RIBOSOMAL PROTEIN S14"/>
    <property type="match status" value="1"/>
</dbReference>
<dbReference type="PANTHER" id="PTHR19836:SF19">
    <property type="entry name" value="SMALL RIBOSOMAL SUBUNIT PROTEIN US14M"/>
    <property type="match status" value="1"/>
</dbReference>
<dbReference type="Pfam" id="PF00253">
    <property type="entry name" value="Ribosomal_S14"/>
    <property type="match status" value="1"/>
</dbReference>
<dbReference type="SUPFAM" id="SSF57716">
    <property type="entry name" value="Glucocorticoid receptor-like (DNA-binding domain)"/>
    <property type="match status" value="1"/>
</dbReference>
<dbReference type="PROSITE" id="PS00527">
    <property type="entry name" value="RIBOSOMAL_S14"/>
    <property type="match status" value="1"/>
</dbReference>
<organism>
    <name type="scientific">Ureaplasma parvum serovar 3 (strain ATCC 27815 / 27 / NCTC 11736)</name>
    <dbReference type="NCBI Taxonomy" id="505682"/>
    <lineage>
        <taxon>Bacteria</taxon>
        <taxon>Bacillati</taxon>
        <taxon>Mycoplasmatota</taxon>
        <taxon>Mycoplasmoidales</taxon>
        <taxon>Mycoplasmoidaceae</taxon>
        <taxon>Ureaplasma</taxon>
    </lineage>
</organism>
<accession>B1AIN3</accession>